<sequence>MEKFFITDNTTDNTTDNTTDNTTDNTTDKLTDNNSIDNDKINKNITVDSLTNDLNKLSLKSPSDKSSSGKSSIPNKSLVPNKSLVPSKIFFSKTTFFKIKLDEIMSCHNITISDLNSIKNKIESKNLQIDEINTIIIGKILKKLGLYKYHGHEQYILNIIIGKPVQKMSSQEKNLIMKLFDQVLVTFNLLKKKYNWNNFLHYGYLIYQLCKLLEYNDFLDNIALPNNETIIYVNNQAWKKICSHNNWIYYEISQIKN</sequence>
<gene>
    <name type="ordered locus">MIMI_R430</name>
</gene>
<comment type="function">
    <text evidence="2">Putative transcription factor.</text>
</comment>
<comment type="similarity">
    <text evidence="3">Belongs to the nucleo-cytoplasmic large DNA viruses (NCLDVs) VLTF-3 family.</text>
</comment>
<organismHost>
    <name type="scientific">Acanthamoeba polyphaga</name>
    <name type="common">Amoeba</name>
    <dbReference type="NCBI Taxonomy" id="5757"/>
</organismHost>
<name>YR430_MIMIV</name>
<keyword id="KW-1185">Reference proteome</keyword>
<keyword id="KW-0804">Transcription</keyword>
<keyword id="KW-0805">Transcription regulation</keyword>
<reference key="1">
    <citation type="journal article" date="2004" name="Science">
        <title>The 1.2-megabase genome sequence of Mimivirus.</title>
        <authorList>
            <person name="Raoult D."/>
            <person name="Audic S."/>
            <person name="Robert C."/>
            <person name="Abergel C."/>
            <person name="Renesto P."/>
            <person name="Ogata H."/>
            <person name="La Scola B."/>
            <person name="Susan M."/>
            <person name="Claverie J.-M."/>
        </authorList>
    </citation>
    <scope>NUCLEOTIDE SEQUENCE [LARGE SCALE GENOMIC DNA]</scope>
    <source>
        <strain>Rowbotham-Bradford</strain>
    </source>
</reference>
<reference key="2">
    <citation type="journal article" date="2006" name="Virus Res.">
        <title>Evolutionary genomics of nucleo-cytoplasmic large DNA viruses.</title>
        <authorList>
            <person name="Iyer L.M."/>
            <person name="Balaji S."/>
            <person name="Koonin E.V."/>
            <person name="Aravind L."/>
        </authorList>
    </citation>
    <scope>FUNCTION</scope>
</reference>
<proteinExistence type="inferred from homology"/>
<organism>
    <name type="scientific">Acanthamoeba polyphaga mimivirus</name>
    <name type="common">APMV</name>
    <dbReference type="NCBI Taxonomy" id="212035"/>
    <lineage>
        <taxon>Viruses</taxon>
        <taxon>Varidnaviria</taxon>
        <taxon>Bamfordvirae</taxon>
        <taxon>Nucleocytoviricota</taxon>
        <taxon>Megaviricetes</taxon>
        <taxon>Imitervirales</taxon>
        <taxon>Mimiviridae</taxon>
        <taxon>Megamimivirinae</taxon>
        <taxon>Mimivirus</taxon>
        <taxon>Mimivirus bradfordmassiliense</taxon>
    </lineage>
</organism>
<evidence type="ECO:0000256" key="1">
    <source>
        <dbReference type="SAM" id="MobiDB-lite"/>
    </source>
</evidence>
<evidence type="ECO:0000269" key="2">
    <source>
    </source>
</evidence>
<evidence type="ECO:0000305" key="3"/>
<dbReference type="EMBL" id="AY653733">
    <property type="protein sequence ID" value="AAV50699.1"/>
    <property type="molecule type" value="Genomic_DNA"/>
</dbReference>
<dbReference type="SMR" id="Q5UQM5"/>
<dbReference type="KEGG" id="vg:9925051"/>
<dbReference type="OrthoDB" id="8889at10239"/>
<dbReference type="Proteomes" id="UP000001134">
    <property type="component" value="Genome"/>
</dbReference>
<dbReference type="GO" id="GO:0046782">
    <property type="term" value="P:regulation of viral transcription"/>
    <property type="evidence" value="ECO:0007669"/>
    <property type="project" value="InterPro"/>
</dbReference>
<dbReference type="InterPro" id="IPR007031">
    <property type="entry name" value="Poxvirus_VLTF3"/>
</dbReference>
<dbReference type="Pfam" id="PF04947">
    <property type="entry name" value="Pox_VLTF3"/>
    <property type="match status" value="1"/>
</dbReference>
<protein>
    <recommendedName>
        <fullName>Putative transcription factor R430</fullName>
    </recommendedName>
</protein>
<accession>Q5UQM5</accession>
<feature type="chain" id="PRO_0000253917" description="Putative transcription factor R430">
    <location>
        <begin position="1"/>
        <end position="257"/>
    </location>
</feature>
<feature type="region of interest" description="Disordered" evidence="1">
    <location>
        <begin position="1"/>
        <end position="35"/>
    </location>
</feature>
<feature type="region of interest" description="Disordered" evidence="1">
    <location>
        <begin position="58"/>
        <end position="77"/>
    </location>
</feature>
<feature type="compositionally biased region" description="Low complexity" evidence="1">
    <location>
        <begin position="7"/>
        <end position="25"/>
    </location>
</feature>
<feature type="compositionally biased region" description="Basic and acidic residues" evidence="1">
    <location>
        <begin position="26"/>
        <end position="35"/>
    </location>
</feature>